<comment type="function">
    <text evidence="1">Catalyzes the NADPH-dependent reduction of glyoxylate and hydroxypyruvate into glycolate and glycerate, respectively.</text>
</comment>
<comment type="catalytic activity">
    <reaction evidence="1">
        <text>glycolate + NADP(+) = glyoxylate + NADPH + H(+)</text>
        <dbReference type="Rhea" id="RHEA:10992"/>
        <dbReference type="ChEBI" id="CHEBI:15378"/>
        <dbReference type="ChEBI" id="CHEBI:29805"/>
        <dbReference type="ChEBI" id="CHEBI:36655"/>
        <dbReference type="ChEBI" id="CHEBI:57783"/>
        <dbReference type="ChEBI" id="CHEBI:58349"/>
        <dbReference type="EC" id="1.1.1.79"/>
    </reaction>
</comment>
<comment type="catalytic activity">
    <reaction evidence="1">
        <text>(R)-glycerate + NAD(+) = 3-hydroxypyruvate + NADH + H(+)</text>
        <dbReference type="Rhea" id="RHEA:17905"/>
        <dbReference type="ChEBI" id="CHEBI:15378"/>
        <dbReference type="ChEBI" id="CHEBI:16659"/>
        <dbReference type="ChEBI" id="CHEBI:17180"/>
        <dbReference type="ChEBI" id="CHEBI:57540"/>
        <dbReference type="ChEBI" id="CHEBI:57945"/>
        <dbReference type="EC" id="1.1.1.81"/>
    </reaction>
</comment>
<comment type="catalytic activity">
    <reaction evidence="1">
        <text>(R)-glycerate + NADP(+) = 3-hydroxypyruvate + NADPH + H(+)</text>
        <dbReference type="Rhea" id="RHEA:18657"/>
        <dbReference type="ChEBI" id="CHEBI:15378"/>
        <dbReference type="ChEBI" id="CHEBI:16659"/>
        <dbReference type="ChEBI" id="CHEBI:17180"/>
        <dbReference type="ChEBI" id="CHEBI:57783"/>
        <dbReference type="ChEBI" id="CHEBI:58349"/>
        <dbReference type="EC" id="1.1.1.81"/>
    </reaction>
</comment>
<comment type="subunit">
    <text evidence="1">Homodimer.</text>
</comment>
<comment type="subcellular location">
    <subcellularLocation>
        <location evidence="1">Cytoplasm</location>
    </subcellularLocation>
</comment>
<comment type="similarity">
    <text evidence="1">Belongs to the D-isomer specific 2-hydroxyacid dehydrogenase family. GhrB subfamily.</text>
</comment>
<dbReference type="EC" id="1.1.1.79" evidence="1"/>
<dbReference type="EC" id="1.1.1.81" evidence="1"/>
<dbReference type="EMBL" id="AE017220">
    <property type="protein sequence ID" value="AAX67484.1"/>
    <property type="molecule type" value="Genomic_DNA"/>
</dbReference>
<dbReference type="RefSeq" id="WP_000804686.1">
    <property type="nucleotide sequence ID" value="NC_006905.1"/>
</dbReference>
<dbReference type="SMR" id="Q57IH8"/>
<dbReference type="KEGG" id="sec:SCH_3578"/>
<dbReference type="HOGENOM" id="CLU_019796_1_2_6"/>
<dbReference type="Proteomes" id="UP000000538">
    <property type="component" value="Chromosome"/>
</dbReference>
<dbReference type="GO" id="GO:0005829">
    <property type="term" value="C:cytosol"/>
    <property type="evidence" value="ECO:0007669"/>
    <property type="project" value="TreeGrafter"/>
</dbReference>
<dbReference type="GO" id="GO:0005886">
    <property type="term" value="C:plasma membrane"/>
    <property type="evidence" value="ECO:0007669"/>
    <property type="project" value="UniProtKB-UniRule"/>
</dbReference>
<dbReference type="GO" id="GO:0030267">
    <property type="term" value="F:glyoxylate reductase (NADPH) activity"/>
    <property type="evidence" value="ECO:0007669"/>
    <property type="project" value="UniProtKB-UniRule"/>
</dbReference>
<dbReference type="GO" id="GO:0008465">
    <property type="term" value="F:hydroxypyruvate reductase (NADH) activity"/>
    <property type="evidence" value="ECO:0007669"/>
    <property type="project" value="RHEA"/>
</dbReference>
<dbReference type="GO" id="GO:0120509">
    <property type="term" value="F:hydroxypyruvate reductase (NADPH) activity"/>
    <property type="evidence" value="ECO:0007669"/>
    <property type="project" value="RHEA"/>
</dbReference>
<dbReference type="GO" id="GO:0051287">
    <property type="term" value="F:NAD binding"/>
    <property type="evidence" value="ECO:0007669"/>
    <property type="project" value="InterPro"/>
</dbReference>
<dbReference type="CDD" id="cd05301">
    <property type="entry name" value="GDH"/>
    <property type="match status" value="1"/>
</dbReference>
<dbReference type="FunFam" id="3.40.50.720:FF:000026">
    <property type="entry name" value="Glyoxylate/hydroxypyruvate reductase B"/>
    <property type="match status" value="1"/>
</dbReference>
<dbReference type="Gene3D" id="3.40.50.720">
    <property type="entry name" value="NAD(P)-binding Rossmann-like Domain"/>
    <property type="match status" value="2"/>
</dbReference>
<dbReference type="HAMAP" id="MF_01667">
    <property type="entry name" value="2_Hacid_dh_C_GhrB"/>
    <property type="match status" value="1"/>
</dbReference>
<dbReference type="InterPro" id="IPR050223">
    <property type="entry name" value="D-isomer_2-hydroxyacid_DH"/>
</dbReference>
<dbReference type="InterPro" id="IPR006139">
    <property type="entry name" value="D-isomer_2_OHA_DH_cat_dom"/>
</dbReference>
<dbReference type="InterPro" id="IPR029753">
    <property type="entry name" value="D-isomer_DH_CS"/>
</dbReference>
<dbReference type="InterPro" id="IPR006140">
    <property type="entry name" value="D-isomer_DH_NAD-bd"/>
</dbReference>
<dbReference type="InterPro" id="IPR023756">
    <property type="entry name" value="Glyo/OHPyrv_Rdtase_B"/>
</dbReference>
<dbReference type="InterPro" id="IPR036291">
    <property type="entry name" value="NAD(P)-bd_dom_sf"/>
</dbReference>
<dbReference type="NCBIfam" id="NF011938">
    <property type="entry name" value="PRK15409.1"/>
    <property type="match status" value="1"/>
</dbReference>
<dbReference type="PANTHER" id="PTHR10996">
    <property type="entry name" value="2-HYDROXYACID DEHYDROGENASE-RELATED"/>
    <property type="match status" value="1"/>
</dbReference>
<dbReference type="PANTHER" id="PTHR10996:SF283">
    <property type="entry name" value="GLYOXYLATE_HYDROXYPYRUVATE REDUCTASE B"/>
    <property type="match status" value="1"/>
</dbReference>
<dbReference type="Pfam" id="PF00389">
    <property type="entry name" value="2-Hacid_dh"/>
    <property type="match status" value="1"/>
</dbReference>
<dbReference type="Pfam" id="PF02826">
    <property type="entry name" value="2-Hacid_dh_C"/>
    <property type="match status" value="1"/>
</dbReference>
<dbReference type="SUPFAM" id="SSF52283">
    <property type="entry name" value="Formate/glycerate dehydrogenase catalytic domain-like"/>
    <property type="match status" value="1"/>
</dbReference>
<dbReference type="SUPFAM" id="SSF51735">
    <property type="entry name" value="NAD(P)-binding Rossmann-fold domains"/>
    <property type="match status" value="1"/>
</dbReference>
<dbReference type="PROSITE" id="PS00670">
    <property type="entry name" value="D_2_HYDROXYACID_DH_2"/>
    <property type="match status" value="1"/>
</dbReference>
<dbReference type="PROSITE" id="PS00671">
    <property type="entry name" value="D_2_HYDROXYACID_DH_3"/>
    <property type="match status" value="1"/>
</dbReference>
<name>GHRB_SALCH</name>
<organism>
    <name type="scientific">Salmonella choleraesuis (strain SC-B67)</name>
    <dbReference type="NCBI Taxonomy" id="321314"/>
    <lineage>
        <taxon>Bacteria</taxon>
        <taxon>Pseudomonadati</taxon>
        <taxon>Pseudomonadota</taxon>
        <taxon>Gammaproteobacteria</taxon>
        <taxon>Enterobacterales</taxon>
        <taxon>Enterobacteriaceae</taxon>
        <taxon>Salmonella</taxon>
    </lineage>
</organism>
<keyword id="KW-0963">Cytoplasm</keyword>
<keyword id="KW-0520">NAD</keyword>
<keyword id="KW-0521">NADP</keyword>
<keyword id="KW-0560">Oxidoreductase</keyword>
<accession>Q57IH8</accession>
<gene>
    <name evidence="1" type="primary">ghrB</name>
    <name type="ordered locus">SCH_3578</name>
</gene>
<evidence type="ECO:0000255" key="1">
    <source>
        <dbReference type="HAMAP-Rule" id="MF_01667"/>
    </source>
</evidence>
<feature type="chain" id="PRO_0000348393" description="Glyoxylate/hydroxypyruvate reductase B">
    <location>
        <begin position="1"/>
        <end position="324"/>
    </location>
</feature>
<feature type="active site" evidence="1">
    <location>
        <position position="237"/>
    </location>
</feature>
<feature type="active site" evidence="1">
    <location>
        <position position="266"/>
    </location>
</feature>
<feature type="active site" description="Proton donor" evidence="1">
    <location>
        <position position="285"/>
    </location>
</feature>
<reference key="1">
    <citation type="journal article" date="2005" name="Nucleic Acids Res.">
        <title>The genome sequence of Salmonella enterica serovar Choleraesuis, a highly invasive and resistant zoonotic pathogen.</title>
        <authorList>
            <person name="Chiu C.-H."/>
            <person name="Tang P."/>
            <person name="Chu C."/>
            <person name="Hu S."/>
            <person name="Bao Q."/>
            <person name="Yu J."/>
            <person name="Chou Y.-Y."/>
            <person name="Wang H.-S."/>
            <person name="Lee Y.-S."/>
        </authorList>
    </citation>
    <scope>NUCLEOTIDE SEQUENCE [LARGE SCALE GENOMIC DNA]</scope>
    <source>
        <strain>SC-B67</strain>
    </source>
</reference>
<proteinExistence type="inferred from homology"/>
<protein>
    <recommendedName>
        <fullName evidence="1">Glyoxylate/hydroxypyruvate reductase B</fullName>
        <ecNumber evidence="1">1.1.1.79</ecNumber>
        <ecNumber evidence="1">1.1.1.81</ecNumber>
    </recommendedName>
</protein>
<sequence>MKPSIILYKTLPDDLLHRLEAHFTVTQVPNLHPETVARHAQAFASAQGLLGASETVNRALLEKMPALRAASTISVGYDNVEVDALTARKIVLMHTPTVLTETVADTVMALMLATARRVVDVAERVKAGEWTESIGPAWFGVDVHHKTLGIVGMGRIGMALAQRAHFGFTMPVLYHARRRHQEAEDRFNARYCDLDTLLQEADFVCVILPLTAETRHLFGATQFARMKSSAIFINAGRGPVVDENALIAALQNGEIYAAGLDVFEQEPLSVDSPLLNMSNVVAVPHIGSATHETRYNMMACAVDNLIDALQGKIEKNCVNPQAAG</sequence>